<dbReference type="EC" id="1.17.4.1"/>
<dbReference type="EMBL" id="AY653733">
    <property type="protein sequence ID" value="AAQ09571.2"/>
    <property type="molecule type" value="Genomic_DNA"/>
</dbReference>
<dbReference type="SMR" id="Q7T6Y9"/>
<dbReference type="KEGG" id="vg:9924929"/>
<dbReference type="OrthoDB" id="4477at10239"/>
<dbReference type="Proteomes" id="UP000001134">
    <property type="component" value="Genome"/>
</dbReference>
<dbReference type="GO" id="GO:0046872">
    <property type="term" value="F:metal ion binding"/>
    <property type="evidence" value="ECO:0007669"/>
    <property type="project" value="UniProtKB-KW"/>
</dbReference>
<dbReference type="GO" id="GO:0004748">
    <property type="term" value="F:ribonucleoside-diphosphate reductase activity, thioredoxin disulfide as acceptor"/>
    <property type="evidence" value="ECO:0007669"/>
    <property type="project" value="UniProtKB-EC"/>
</dbReference>
<dbReference type="GO" id="GO:0009263">
    <property type="term" value="P:deoxyribonucleotide biosynthetic process"/>
    <property type="evidence" value="ECO:0007669"/>
    <property type="project" value="UniProtKB-KW"/>
</dbReference>
<dbReference type="CDD" id="cd01049">
    <property type="entry name" value="RNRR2"/>
    <property type="match status" value="1"/>
</dbReference>
<dbReference type="Gene3D" id="1.10.620.20">
    <property type="entry name" value="Ribonucleotide Reductase, subunit A"/>
    <property type="match status" value="1"/>
</dbReference>
<dbReference type="InterPro" id="IPR009078">
    <property type="entry name" value="Ferritin-like_SF"/>
</dbReference>
<dbReference type="InterPro" id="IPR012348">
    <property type="entry name" value="RNR-like"/>
</dbReference>
<dbReference type="InterPro" id="IPR033909">
    <property type="entry name" value="RNR_small"/>
</dbReference>
<dbReference type="InterPro" id="IPR030475">
    <property type="entry name" value="RNR_small_AS"/>
</dbReference>
<dbReference type="InterPro" id="IPR000358">
    <property type="entry name" value="RNR_small_fam"/>
</dbReference>
<dbReference type="PANTHER" id="PTHR23409">
    <property type="entry name" value="RIBONUCLEOSIDE-DIPHOSPHATE REDUCTASE SMALL CHAIN"/>
    <property type="match status" value="1"/>
</dbReference>
<dbReference type="PANTHER" id="PTHR23409:SF18">
    <property type="entry name" value="RIBONUCLEOSIDE-DIPHOSPHATE REDUCTASE SUBUNIT M2"/>
    <property type="match status" value="1"/>
</dbReference>
<dbReference type="Pfam" id="PF00268">
    <property type="entry name" value="Ribonuc_red_sm"/>
    <property type="match status" value="1"/>
</dbReference>
<dbReference type="SUPFAM" id="SSF47240">
    <property type="entry name" value="Ferritin-like"/>
    <property type="match status" value="1"/>
</dbReference>
<dbReference type="PROSITE" id="PS00368">
    <property type="entry name" value="RIBORED_SMALL"/>
    <property type="match status" value="1"/>
</dbReference>
<organism>
    <name type="scientific">Acanthamoeba polyphaga mimivirus</name>
    <name type="common">APMV</name>
    <dbReference type="NCBI Taxonomy" id="212035"/>
    <lineage>
        <taxon>Viruses</taxon>
        <taxon>Varidnaviria</taxon>
        <taxon>Bamfordvirae</taxon>
        <taxon>Nucleocytoviricota</taxon>
        <taxon>Megaviricetes</taxon>
        <taxon>Imitervirales</taxon>
        <taxon>Mimiviridae</taxon>
        <taxon>Megamimivirinae</taxon>
        <taxon>Mimivirus</taxon>
        <taxon>Mimivirus bradfordmassiliense</taxon>
    </lineage>
</organism>
<protein>
    <recommendedName>
        <fullName>Ribonucleoside-diphosphate reductase small chain</fullName>
        <ecNumber>1.17.4.1</ecNumber>
    </recommendedName>
    <alternativeName>
        <fullName>Ribonucleotide reductase small subunit</fullName>
    </alternativeName>
</protein>
<proteinExistence type="inferred from homology"/>
<keyword id="KW-0215">Deoxyribonucleotide synthesis</keyword>
<keyword id="KW-0408">Iron</keyword>
<keyword id="KW-0479">Metal-binding</keyword>
<keyword id="KW-0560">Oxidoreductase</keyword>
<keyword id="KW-1185">Reference proteome</keyword>
<feature type="chain" id="PRO_0000190494" description="Ribonucleoside-diphosphate reductase small chain">
    <location>
        <begin position="1"/>
        <end position="417"/>
    </location>
</feature>
<feature type="active site" evidence="2">
    <location>
        <position position="206"/>
    </location>
</feature>
<feature type="binding site" evidence="2">
    <location>
        <position position="168"/>
    </location>
    <ligand>
        <name>Fe cation</name>
        <dbReference type="ChEBI" id="CHEBI:24875"/>
        <label>1</label>
    </ligand>
</feature>
<feature type="binding site" evidence="2">
    <location>
        <position position="199"/>
    </location>
    <ligand>
        <name>Fe cation</name>
        <dbReference type="ChEBI" id="CHEBI:24875"/>
        <label>1</label>
    </ligand>
</feature>
<feature type="binding site" evidence="1">
    <location>
        <position position="199"/>
    </location>
    <ligand>
        <name>Fe cation</name>
        <dbReference type="ChEBI" id="CHEBI:24875"/>
        <label>2</label>
    </ligand>
</feature>
<feature type="binding site" evidence="2">
    <location>
        <position position="202"/>
    </location>
    <ligand>
        <name>Fe cation</name>
        <dbReference type="ChEBI" id="CHEBI:24875"/>
        <label>1</label>
    </ligand>
</feature>
<feature type="binding site" evidence="1">
    <location>
        <position position="261"/>
    </location>
    <ligand>
        <name>Fe cation</name>
        <dbReference type="ChEBI" id="CHEBI:24875"/>
        <label>2</label>
    </ligand>
</feature>
<feature type="binding site" evidence="1">
    <location>
        <position position="297"/>
    </location>
    <ligand>
        <name>Fe cation</name>
        <dbReference type="ChEBI" id="CHEBI:24875"/>
        <label>2</label>
    </ligand>
</feature>
<feature type="binding site" evidence="1">
    <location>
        <position position="300"/>
    </location>
    <ligand>
        <name>Fe cation</name>
        <dbReference type="ChEBI" id="CHEBI:24875"/>
        <label>2</label>
    </ligand>
</feature>
<evidence type="ECO:0000250" key="1"/>
<evidence type="ECO:0000255" key="2">
    <source>
        <dbReference type="PROSITE-ProRule" id="PRU10014"/>
    </source>
</evidence>
<evidence type="ECO:0000305" key="3"/>
<accession>Q7T6Y9</accession>
<organismHost>
    <name type="scientific">Acanthamoeba polyphaga</name>
    <name type="common">Amoeba</name>
    <dbReference type="NCBI Taxonomy" id="5757"/>
</organismHost>
<reference key="1">
    <citation type="journal article" date="2004" name="Science">
        <title>The 1.2-megabase genome sequence of Mimivirus.</title>
        <authorList>
            <person name="Raoult D."/>
            <person name="Audic S."/>
            <person name="Robert C."/>
            <person name="Abergel C."/>
            <person name="Renesto P."/>
            <person name="Ogata H."/>
            <person name="La Scola B."/>
            <person name="Susan M."/>
            <person name="Claverie J.-M."/>
        </authorList>
    </citation>
    <scope>NUCLEOTIDE SEQUENCE [LARGE SCALE GENOMIC DNA]</scope>
    <source>
        <strain>Rowbotham-Bradford</strain>
    </source>
</reference>
<gene>
    <name type="primary">RNR2</name>
    <name type="ordered locus">MIMI_L312</name>
</gene>
<name>RIR2_MIMIV</name>
<comment type="function">
    <text evidence="1">Ribonucleoside-diphosphate reductase holoenzyme provides the precursors necessary for viral DNA synthesis. Allows virus growth in non-dividing cells. Catalyzes the biosynthesis of deoxyribonucleotides from the corresponding ribonucleotides (By similarity).</text>
</comment>
<comment type="catalytic activity">
    <reaction evidence="2">
        <text>a 2'-deoxyribonucleoside 5'-diphosphate + [thioredoxin]-disulfide + H2O = a ribonucleoside 5'-diphosphate + [thioredoxin]-dithiol</text>
        <dbReference type="Rhea" id="RHEA:23252"/>
        <dbReference type="Rhea" id="RHEA-COMP:10698"/>
        <dbReference type="Rhea" id="RHEA-COMP:10700"/>
        <dbReference type="ChEBI" id="CHEBI:15377"/>
        <dbReference type="ChEBI" id="CHEBI:29950"/>
        <dbReference type="ChEBI" id="CHEBI:50058"/>
        <dbReference type="ChEBI" id="CHEBI:57930"/>
        <dbReference type="ChEBI" id="CHEBI:73316"/>
        <dbReference type="EC" id="1.17.4.1"/>
    </reaction>
</comment>
<comment type="cofactor">
    <cofactor evidence="1">
        <name>Fe cation</name>
        <dbReference type="ChEBI" id="CHEBI:24875"/>
    </cofactor>
    <text evidence="1">Binds 2 iron ions per subunit.</text>
</comment>
<comment type="subunit">
    <text evidence="1">Heterotetramer composed of a homodimer of the large subunit (R1) and a homodimer of the small subunit (R2). Larger multisubunit protein complex are also active, composed of (R1)n(R2)n (By similarity).</text>
</comment>
<comment type="similarity">
    <text evidence="3">Belongs to the ribonucleoside diphosphate reductase small chain family.</text>
</comment>
<sequence length="417" mass="48607">MSSEKIKLVDEVFGSVKNTITYEQLHNINGKFHNISDKFVENISESISEPTTINSKKKTSELIFSEETLNNVEIIDTEPYLSDYHKHAIDFENDVIMKEPILSLKSEQYTVHPIKYQKVWDNYKDQMKNYWTVEEVDLAKDVNDWNNHLSDDDRNFIMHVLAFFAAADGIVNANIKENLIDVVKIKEAECAYGFQYAMENAHGEMYSLMLTTFVKDDALRNKLINSIKTMPSIKKKADWCNKWIKSDKTYAHKLVAFSIVEGVFFSGSFASIFWLKTREMHVMPGLIISNQFIARDENKHVELACIMYSLLNNRLKESVVYQIIDEAIEIEEEFINDSLPCKLLGMNSELMSQYIKYVADRLLVDLGYRKKFNVDNPFEYMKKIDVFVKANFFEKRNDAYSNANIDNEKKIVFLENF</sequence>